<feature type="chain" id="PRO_0000291531" description="Alpha-protein kinase 3">
    <location>
        <begin position="1"/>
        <end position="1680"/>
    </location>
</feature>
<feature type="domain" description="Ig-like 1" evidence="3">
    <location>
        <begin position="77"/>
        <end position="173"/>
    </location>
</feature>
<feature type="domain" description="Ig-like 2" evidence="3">
    <location>
        <begin position="1251"/>
        <end position="1339"/>
    </location>
</feature>
<feature type="domain" description="Alpha-type protein kinase" evidence="5">
    <location>
        <begin position="1367"/>
        <end position="1600"/>
    </location>
</feature>
<feature type="region of interest" description="Disordered" evidence="6">
    <location>
        <begin position="1"/>
        <end position="37"/>
    </location>
</feature>
<feature type="region of interest" description="Disordered" evidence="6">
    <location>
        <begin position="237"/>
        <end position="288"/>
    </location>
</feature>
<feature type="region of interest" description="Disordered" evidence="6">
    <location>
        <begin position="302"/>
        <end position="759"/>
    </location>
</feature>
<feature type="region of interest" description="Disordered" evidence="6">
    <location>
        <begin position="785"/>
        <end position="950"/>
    </location>
</feature>
<feature type="region of interest" description="Disordered" evidence="6">
    <location>
        <begin position="1078"/>
        <end position="1128"/>
    </location>
</feature>
<feature type="region of interest" description="Disordered" evidence="6">
    <location>
        <begin position="1147"/>
        <end position="1244"/>
    </location>
</feature>
<feature type="region of interest" description="Disordered" evidence="6">
    <location>
        <begin position="1603"/>
        <end position="1680"/>
    </location>
</feature>
<feature type="compositionally biased region" description="Gly residues" evidence="6">
    <location>
        <begin position="9"/>
        <end position="21"/>
    </location>
</feature>
<feature type="compositionally biased region" description="Basic and acidic residues" evidence="6">
    <location>
        <begin position="320"/>
        <end position="337"/>
    </location>
</feature>
<feature type="compositionally biased region" description="Polar residues" evidence="6">
    <location>
        <begin position="339"/>
        <end position="353"/>
    </location>
</feature>
<feature type="compositionally biased region" description="Pro residues" evidence="6">
    <location>
        <begin position="402"/>
        <end position="426"/>
    </location>
</feature>
<feature type="compositionally biased region" description="Low complexity" evidence="6">
    <location>
        <begin position="514"/>
        <end position="532"/>
    </location>
</feature>
<feature type="compositionally biased region" description="Polar residues" evidence="6">
    <location>
        <begin position="557"/>
        <end position="566"/>
    </location>
</feature>
<feature type="compositionally biased region" description="Polar residues" evidence="6">
    <location>
        <begin position="731"/>
        <end position="744"/>
    </location>
</feature>
<feature type="compositionally biased region" description="Basic and acidic residues" evidence="6">
    <location>
        <begin position="785"/>
        <end position="796"/>
    </location>
</feature>
<feature type="compositionally biased region" description="Polar residues" evidence="6">
    <location>
        <begin position="917"/>
        <end position="932"/>
    </location>
</feature>
<feature type="compositionally biased region" description="Basic and acidic residues" evidence="6">
    <location>
        <begin position="1087"/>
        <end position="1111"/>
    </location>
</feature>
<feature type="compositionally biased region" description="Basic and acidic residues" evidence="6">
    <location>
        <begin position="1151"/>
        <end position="1165"/>
    </location>
</feature>
<feature type="compositionally biased region" description="Basic and acidic residues" evidence="6">
    <location>
        <begin position="1231"/>
        <end position="1244"/>
    </location>
</feature>
<feature type="compositionally biased region" description="Polar residues" evidence="6">
    <location>
        <begin position="1639"/>
        <end position="1660"/>
    </location>
</feature>
<feature type="compositionally biased region" description="Polar residues" evidence="6">
    <location>
        <begin position="1671"/>
        <end position="1680"/>
    </location>
</feature>
<feature type="modified residue" description="Phosphoserine" evidence="13">
    <location>
        <position position="229"/>
    </location>
</feature>
<feature type="modified residue" description="Phosphoserine" evidence="13">
    <location>
        <position position="1199"/>
    </location>
</feature>
<feature type="disulfide bond" evidence="1 4">
    <location>
        <begin position="1273"/>
        <end position="1323"/>
    </location>
</feature>
<feature type="sequence conflict" description="In Ref. 1; AAK60496." evidence="11" ref="1">
    <original>S</original>
    <variation>N</variation>
    <location>
        <position position="38"/>
    </location>
</feature>
<feature type="sequence conflict" description="In Ref. 1; AAK60496." evidence="11" ref="1">
    <original>L</original>
    <variation>LL</variation>
    <location>
        <position position="214"/>
    </location>
</feature>
<feature type="sequence conflict" description="In Ref. 1; AAK60496." evidence="11" ref="1">
    <original>V</original>
    <variation>A</variation>
    <location>
        <position position="408"/>
    </location>
</feature>
<feature type="sequence conflict" description="In Ref. 1; AAK60496." evidence="11" ref="1">
    <original>L</original>
    <variation>P</variation>
    <location>
        <position position="413"/>
    </location>
</feature>
<feature type="sequence conflict" description="In Ref. 1; AAK60496 and 3; BAD90441." evidence="11" ref="1 3">
    <location>
        <begin position="662"/>
        <end position="664"/>
    </location>
</feature>
<feature type="sequence conflict" description="In Ref. 1; AAK60496 and 3; BAD90441." evidence="11" ref="1 3">
    <original>A</original>
    <variation>T</variation>
    <location>
        <position position="928"/>
    </location>
</feature>
<feature type="sequence conflict" description="In Ref. 3; BAD90441." evidence="11" ref="3">
    <original>S</original>
    <variation>R</variation>
    <location>
        <position position="1299"/>
    </location>
</feature>
<feature type="sequence conflict" description="In Ref. 4; BAC34907." evidence="11" ref="4">
    <original>S</original>
    <variation>G</variation>
    <location>
        <position position="1648"/>
    </location>
</feature>
<proteinExistence type="evidence at protein level"/>
<keyword id="KW-0217">Developmental protein</keyword>
<keyword id="KW-0903">Direct protein sequencing</keyword>
<keyword id="KW-1015">Disulfide bond</keyword>
<keyword id="KW-0393">Immunoglobulin domain</keyword>
<keyword id="KW-0418">Kinase</keyword>
<keyword id="KW-0539">Nucleus</keyword>
<keyword id="KW-0597">Phosphoprotein</keyword>
<keyword id="KW-1185">Reference proteome</keyword>
<keyword id="KW-0677">Repeat</keyword>
<keyword id="KW-0723">Serine/threonine-protein kinase</keyword>
<keyword id="KW-0808">Transferase</keyword>
<dbReference type="EC" id="2.7.11.1" evidence="2"/>
<dbReference type="EMBL" id="AF338872">
    <property type="protein sequence ID" value="AAK60496.1"/>
    <property type="status" value="ALT_FRAME"/>
    <property type="molecule type" value="mRNA"/>
</dbReference>
<dbReference type="EMBL" id="JH584275">
    <property type="status" value="NOT_ANNOTATED_CDS"/>
    <property type="molecule type" value="Genomic_DNA"/>
</dbReference>
<dbReference type="EMBL" id="AK220384">
    <property type="protein sequence ID" value="BAD90441.1"/>
    <property type="molecule type" value="Transcribed_RNA"/>
</dbReference>
<dbReference type="EMBL" id="AK052268">
    <property type="protein sequence ID" value="BAC34907.1"/>
    <property type="molecule type" value="mRNA"/>
</dbReference>
<dbReference type="CCDS" id="CCDS40004.1"/>
<dbReference type="RefSeq" id="NP_473426.2">
    <property type="nucleotide sequence ID" value="NM_054085.2"/>
</dbReference>
<dbReference type="SMR" id="Q924C5"/>
<dbReference type="FunCoup" id="Q924C5">
    <property type="interactions" value="1070"/>
</dbReference>
<dbReference type="STRING" id="10090.ENSMUSP00000102971"/>
<dbReference type="GlyGen" id="Q924C5">
    <property type="glycosylation" value="4 sites, 1 O-linked glycan (1 site)"/>
</dbReference>
<dbReference type="iPTMnet" id="Q924C5"/>
<dbReference type="PhosphoSitePlus" id="Q924C5"/>
<dbReference type="PaxDb" id="10090-ENSMUSP00000102971"/>
<dbReference type="ProteomicsDB" id="296101"/>
<dbReference type="ProteomicsDB" id="367490"/>
<dbReference type="Antibodypedia" id="15507">
    <property type="antibodies" value="47 antibodies from 19 providers"/>
</dbReference>
<dbReference type="DNASU" id="116904"/>
<dbReference type="Ensembl" id="ENSMUST00000107348.2">
    <property type="protein sequence ID" value="ENSMUSP00000102971.2"/>
    <property type="gene ID" value="ENSMUSG00000038763.13"/>
</dbReference>
<dbReference type="GeneID" id="116904"/>
<dbReference type="KEGG" id="mmu:116904"/>
<dbReference type="AGR" id="MGI:2151224"/>
<dbReference type="CTD" id="57538"/>
<dbReference type="MGI" id="MGI:2151224">
    <property type="gene designation" value="Alpk3"/>
</dbReference>
<dbReference type="VEuPathDB" id="HostDB:ENSMUSG00000038763"/>
<dbReference type="eggNOG" id="ENOG502QPP5">
    <property type="taxonomic scope" value="Eukaryota"/>
</dbReference>
<dbReference type="GeneTree" id="ENSGT00940000158534"/>
<dbReference type="HOGENOM" id="CLU_003270_1_0_1"/>
<dbReference type="InParanoid" id="Q924C5"/>
<dbReference type="OMA" id="WPPAINR"/>
<dbReference type="OrthoDB" id="301415at2759"/>
<dbReference type="TreeFam" id="TF332629"/>
<dbReference type="BioGRID-ORCS" id="116904">
    <property type="hits" value="3 hits in 79 CRISPR screens"/>
</dbReference>
<dbReference type="PRO" id="PR:Q924C5"/>
<dbReference type="Proteomes" id="UP000000589">
    <property type="component" value="Chromosome 7"/>
</dbReference>
<dbReference type="RNAct" id="Q924C5">
    <property type="molecule type" value="protein"/>
</dbReference>
<dbReference type="Bgee" id="ENSMUSG00000038763">
    <property type="expression patterns" value="Expressed in temporalis muscle and 71 other cell types or tissues"/>
</dbReference>
<dbReference type="GO" id="GO:0005634">
    <property type="term" value="C:nucleus"/>
    <property type="evidence" value="ECO:0000314"/>
    <property type="project" value="MGI"/>
</dbReference>
<dbReference type="GO" id="GO:0005524">
    <property type="term" value="F:ATP binding"/>
    <property type="evidence" value="ECO:0007669"/>
    <property type="project" value="InterPro"/>
</dbReference>
<dbReference type="GO" id="GO:0106310">
    <property type="term" value="F:protein serine kinase activity"/>
    <property type="evidence" value="ECO:0007669"/>
    <property type="project" value="RHEA"/>
</dbReference>
<dbReference type="GO" id="GO:0004674">
    <property type="term" value="F:protein serine/threonine kinase activity"/>
    <property type="evidence" value="ECO:0007669"/>
    <property type="project" value="UniProtKB-KW"/>
</dbReference>
<dbReference type="GO" id="GO:0055013">
    <property type="term" value="P:cardiac muscle cell development"/>
    <property type="evidence" value="ECO:0000315"/>
    <property type="project" value="MGI"/>
</dbReference>
<dbReference type="GO" id="GO:0055007">
    <property type="term" value="P:cardiac muscle cell differentiation"/>
    <property type="evidence" value="ECO:0000315"/>
    <property type="project" value="BHF-UCL"/>
</dbReference>
<dbReference type="GO" id="GO:0007507">
    <property type="term" value="P:heart development"/>
    <property type="evidence" value="ECO:0000315"/>
    <property type="project" value="MGI"/>
</dbReference>
<dbReference type="FunFam" id="2.60.40.10:FF:000069">
    <property type="entry name" value="Alpha-protein kinase 3"/>
    <property type="match status" value="1"/>
</dbReference>
<dbReference type="FunFam" id="2.60.40.10:FF:000543">
    <property type="entry name" value="Alpha-protein kinase 3"/>
    <property type="match status" value="1"/>
</dbReference>
<dbReference type="FunFam" id="3.20.200.10:FF:000003">
    <property type="entry name" value="alpha-protein kinase 3"/>
    <property type="match status" value="1"/>
</dbReference>
<dbReference type="Gene3D" id="2.60.40.10">
    <property type="entry name" value="Immunoglobulins"/>
    <property type="match status" value="2"/>
</dbReference>
<dbReference type="Gene3D" id="3.20.200.10">
    <property type="entry name" value="MHCK/EF2 kinase"/>
    <property type="match status" value="1"/>
</dbReference>
<dbReference type="InterPro" id="IPR004166">
    <property type="entry name" value="a-kinase_dom"/>
</dbReference>
<dbReference type="InterPro" id="IPR007110">
    <property type="entry name" value="Ig-like_dom"/>
</dbReference>
<dbReference type="InterPro" id="IPR036179">
    <property type="entry name" value="Ig-like_dom_sf"/>
</dbReference>
<dbReference type="InterPro" id="IPR013783">
    <property type="entry name" value="Ig-like_fold"/>
</dbReference>
<dbReference type="InterPro" id="IPR013098">
    <property type="entry name" value="Ig_I-set"/>
</dbReference>
<dbReference type="InterPro" id="IPR003599">
    <property type="entry name" value="Ig_sub"/>
</dbReference>
<dbReference type="InterPro" id="IPR003598">
    <property type="entry name" value="Ig_sub2"/>
</dbReference>
<dbReference type="InterPro" id="IPR011009">
    <property type="entry name" value="Kinase-like_dom_sf"/>
</dbReference>
<dbReference type="PANTHER" id="PTHR47091">
    <property type="entry name" value="ALPHA-PROTEIN KINASE 2-RELATED"/>
    <property type="match status" value="1"/>
</dbReference>
<dbReference type="PANTHER" id="PTHR47091:SF1">
    <property type="entry name" value="ALPHA-PROTEIN KINASE 3"/>
    <property type="match status" value="1"/>
</dbReference>
<dbReference type="Pfam" id="PF02816">
    <property type="entry name" value="Alpha_kinase"/>
    <property type="match status" value="1"/>
</dbReference>
<dbReference type="Pfam" id="PF07679">
    <property type="entry name" value="I-set"/>
    <property type="match status" value="1"/>
</dbReference>
<dbReference type="SMART" id="SM00811">
    <property type="entry name" value="Alpha_kinase"/>
    <property type="match status" value="1"/>
</dbReference>
<dbReference type="SMART" id="SM00409">
    <property type="entry name" value="IG"/>
    <property type="match status" value="2"/>
</dbReference>
<dbReference type="SMART" id="SM00408">
    <property type="entry name" value="IGc2"/>
    <property type="match status" value="2"/>
</dbReference>
<dbReference type="SUPFAM" id="SSF48726">
    <property type="entry name" value="Immunoglobulin"/>
    <property type="match status" value="2"/>
</dbReference>
<dbReference type="SUPFAM" id="SSF56112">
    <property type="entry name" value="Protein kinase-like (PK-like)"/>
    <property type="match status" value="1"/>
</dbReference>
<dbReference type="PROSITE" id="PS51158">
    <property type="entry name" value="ALPHA_KINASE"/>
    <property type="match status" value="1"/>
</dbReference>
<dbReference type="PROSITE" id="PS50835">
    <property type="entry name" value="IG_LIKE"/>
    <property type="match status" value="2"/>
</dbReference>
<evidence type="ECO:0000250" key="1">
    <source>
        <dbReference type="UniProtKB" id="Q86TB3"/>
    </source>
</evidence>
<evidence type="ECO:0000250" key="2">
    <source>
        <dbReference type="UniProtKB" id="Q96QP1"/>
    </source>
</evidence>
<evidence type="ECO:0000255" key="3"/>
<evidence type="ECO:0000255" key="4">
    <source>
        <dbReference type="PROSITE-ProRule" id="PRU00114"/>
    </source>
</evidence>
<evidence type="ECO:0000255" key="5">
    <source>
        <dbReference type="PROSITE-ProRule" id="PRU00501"/>
    </source>
</evidence>
<evidence type="ECO:0000256" key="6">
    <source>
        <dbReference type="SAM" id="MobiDB-lite"/>
    </source>
</evidence>
<evidence type="ECO:0000269" key="7">
    <source>
    </source>
</evidence>
<evidence type="ECO:0000269" key="8">
    <source>
    </source>
</evidence>
<evidence type="ECO:0000303" key="9">
    <source>
    </source>
</evidence>
<evidence type="ECO:0000303" key="10">
    <source ref="3"/>
</evidence>
<evidence type="ECO:0000305" key="11"/>
<evidence type="ECO:0000312" key="12">
    <source>
        <dbReference type="MGI" id="MGI:2151224"/>
    </source>
</evidence>
<evidence type="ECO:0007744" key="13">
    <source>
    </source>
</evidence>
<comment type="function">
    <text evidence="7 8">Involved in cardiomyocyte differentiation.</text>
</comment>
<comment type="catalytic activity">
    <reaction evidence="2">
        <text>L-seryl-[protein] + ATP = O-phospho-L-seryl-[protein] + ADP + H(+)</text>
        <dbReference type="Rhea" id="RHEA:17989"/>
        <dbReference type="Rhea" id="RHEA-COMP:9863"/>
        <dbReference type="Rhea" id="RHEA-COMP:11604"/>
        <dbReference type="ChEBI" id="CHEBI:15378"/>
        <dbReference type="ChEBI" id="CHEBI:29999"/>
        <dbReference type="ChEBI" id="CHEBI:30616"/>
        <dbReference type="ChEBI" id="CHEBI:83421"/>
        <dbReference type="ChEBI" id="CHEBI:456216"/>
        <dbReference type="EC" id="2.7.11.1"/>
    </reaction>
</comment>
<comment type="catalytic activity">
    <reaction evidence="2">
        <text>L-threonyl-[protein] + ATP = O-phospho-L-threonyl-[protein] + ADP + H(+)</text>
        <dbReference type="Rhea" id="RHEA:46608"/>
        <dbReference type="Rhea" id="RHEA-COMP:11060"/>
        <dbReference type="Rhea" id="RHEA-COMP:11605"/>
        <dbReference type="ChEBI" id="CHEBI:15378"/>
        <dbReference type="ChEBI" id="CHEBI:30013"/>
        <dbReference type="ChEBI" id="CHEBI:30616"/>
        <dbReference type="ChEBI" id="CHEBI:61977"/>
        <dbReference type="ChEBI" id="CHEBI:456216"/>
        <dbReference type="EC" id="2.7.11.1"/>
    </reaction>
</comment>
<comment type="subcellular location">
    <subcellularLocation>
        <location evidence="7">Nucleus</location>
    </subcellularLocation>
</comment>
<comment type="tissue specificity">
    <text evidence="7">Expressed in the heart and skeletal muscle of adult mice.</text>
</comment>
<comment type="developmental stage">
    <text evidence="7">First detected in the cardiac crescent at 7.5 dpc when the developing heart became visible and remains through to 10.5 dpc.</text>
</comment>
<comment type="disruption phenotype">
    <text evidence="8">Mice are viable and were born at the expected Mendelian ratio. They however develop spontaneous cardiomyopathy with features of both hypertrophic and dilated forms of cardiomyopathy. Cardiac hypertrophy is characterized by increased thickness of both left and right ventricular walls and by significantly increased heart weight. Some features are also associated with dilated cardiomyopathy. Cardiomyocytes show an altered architecture, characterized by reduced numbers of abnormal intercalated disks.</text>
</comment>
<comment type="similarity">
    <text evidence="11">Belongs to the protein kinase superfamily. Alpha-type protein kinase family. ALPK subfamily.</text>
</comment>
<comment type="sequence caution" evidence="11">
    <conflict type="frameshift">
        <sequence resource="EMBL-CDS" id="AAK60496"/>
    </conflict>
</comment>
<gene>
    <name evidence="12" type="primary">Alpk3</name>
    <name evidence="10" type="synonym">Kiaa1330</name>
</gene>
<name>ALPK3_MOUSE</name>
<sequence length="1680" mass="180115">MGSRRAAGRGWGLGGRAGAGGDSEDDGPVWTPGPASRSYLLSVRPEASLSSNRLSHPSSGRSTFCSIIAQLTEETQPLFETTLKSRAVSEDSDVRFTCIVTGYPEPEVTWYKDDIELDRYCGLPKYEITHQGNRHTLQLYRCQEEDAAIYQASARNTKGIVSCSGVLEVGTMTEYKIHQRWFAKLKRKAAAKMREIEQSWKHGKEASGEADTLLRKISPDRFQRKRRLSGVEEAVLSTPVREMEEGSSAAWQEGETESAQHPGLGLINSFAPGEAPTNGEPAPENGEDEERGLLTYICEVMELGPQNSPPKESGAKKKRKDEESKPGEQKLELEKAEGSQCSSENVVPSTDKPNSSRREKSTDTQPAQTQPRGRVARGPGIESTRKTASVLGIQDKVQDVPAPAPAPVPAPALAPAPVPVPAPTPVPSRSSEQVYFSLKDMFMETTRAGRSQEEEKPPPPSTRVAGESPPGKTPVKSRLEKVPMVSSQPTSSMVPPPIKPLNRKRFAPPKSKVESTTTSLSSQTSESMAQSLGKALPSASTQVPTPPARRRHGTRDSPLQGQTSHKTPGEALESPATVAPTKSANSSSDTVSVDHDSSGNQGATEPMDTETQEDGRTLVDGRTGSRKKTHTDGKLQVDGRTQGDGAQDRAHASPRTQAGEKAPTDVVTQGSERPQSDRSSWKNLVTQRRVDMQVGQMQAGERWQQDPGDARIQEEEKETQSAAGSIPVAFETQSEQLSMASLSSLPGALKGSPSGCPRESQAIECFEKSTEAPCVQERSDLMLRSEEAAFRSHEDGLLGPPSGNRTYPTQLPPEGHSEHLGGQTHQRSEQEDSLSQCPKKEQPQEPLHVGLSGGHSTGLSQEVPAMPSLPGTGLTSSLQEELPGTAASLHTNTDVPLPSRDQDFPSSAPTLQLGPGSPTQSHPPEAMATSSEGACAKEPNVDGRSSGTRSCDPGLIDSLKNYLLLLLKLSSPETSEARAESQEVADTGGLTSSSTLVPTMEVAGLSPRTSRRILERVENNHLVQSAQTLLLSPCTSRRLTGLLDREVQAGQQALAAAQCSRGPCPTPLTIPAIVVGEEGSAGEDSEERTSQESDKKGLLGEVEGHTVESRTQEPCQEEAMPGEALTGLPAATPEELALGARRKRFLPKVRAGSDGEANKAEERESPTVSPRGPRKGLTPGSPGTPGRERRSPTQARKASMLEVPGAEEEPATGDLVSRSKDSGLDSEPAVDEGKQEALAKQRKAKDLLKAPQVIRKIRVEQFPDSSGSLKLWCQFFNIVSDSVLTWAKDQHPVGEVNRSAGDEGPAALAIVQASPTDCGVYRCTIQNEHGSASTDFCLSPEVLSGFISREEGEVGEEIEMTPMVFAKGLADSGCWGDKLFGRLVSEELRGGGHGLQKASRAKVIYGLEPIFESGRTCIIKVSSLLVFGPSSETSLLGRNYDVTIQGCKIQNMSREYCKIFAAEARAASGFGEVPEIIPLYLIYRPANNIPYATLEEDLGKPLQTYCSRQWGCAGAPAAASSSEALQKCQTFQHWLYQWTNGSFLVTDLTGADWKMTDVQIATKLRGYQGLKESCFPALLDQFASSHQCNTYCDMLGLKPLKGPEAAHPQAKAKGSKSPSAGRKGSQLSPQPQKKGLPSPQGSRKSAPSSRATLQASQAATVQLLGQPPVQDGSSKAQSMR</sequence>
<reference key="1">
    <citation type="journal article" date="2001" name="J. Biol. Chem.">
        <title>A novel myocyte-specific gene midori promotes the differentiation of P19CL6 cells into cardiomyocytes.</title>
        <authorList>
            <person name="Hosoda T."/>
            <person name="Monzen K."/>
            <person name="Hiroi Y."/>
            <person name="Oka T."/>
            <person name="Takimoto E."/>
            <person name="Yazaki Y."/>
            <person name="Nagai R."/>
            <person name="Komuro I."/>
        </authorList>
    </citation>
    <scope>NUCLEOTIDE SEQUENCE [MRNA]</scope>
    <scope>FUNCTION</scope>
    <scope>SUBCELLULAR LOCATION</scope>
    <scope>TISSUE SPECIFICITY</scope>
    <scope>DEVELOPMENTAL STAGE</scope>
    <source>
        <strain>BALB/cJ</strain>
    </source>
</reference>
<reference key="2">
    <citation type="journal article" date="2009" name="PLoS Biol.">
        <title>Lineage-specific biology revealed by a finished genome assembly of the mouse.</title>
        <authorList>
            <person name="Church D.M."/>
            <person name="Goodstadt L."/>
            <person name="Hillier L.W."/>
            <person name="Zody M.C."/>
            <person name="Goldstein S."/>
            <person name="She X."/>
            <person name="Bult C.J."/>
            <person name="Agarwala R."/>
            <person name="Cherry J.L."/>
            <person name="DiCuccio M."/>
            <person name="Hlavina W."/>
            <person name="Kapustin Y."/>
            <person name="Meric P."/>
            <person name="Maglott D."/>
            <person name="Birtle Z."/>
            <person name="Marques A.C."/>
            <person name="Graves T."/>
            <person name="Zhou S."/>
            <person name="Teague B."/>
            <person name="Potamousis K."/>
            <person name="Churas C."/>
            <person name="Place M."/>
            <person name="Herschleb J."/>
            <person name="Runnheim R."/>
            <person name="Forrest D."/>
            <person name="Amos-Landgraf J."/>
            <person name="Schwartz D.C."/>
            <person name="Cheng Z."/>
            <person name="Lindblad-Toh K."/>
            <person name="Eichler E.E."/>
            <person name="Ponting C.P."/>
        </authorList>
    </citation>
    <scope>NUCLEOTIDE SEQUENCE [LARGE SCALE GENOMIC DNA]</scope>
    <source>
        <strain>C57BL/6J</strain>
    </source>
</reference>
<reference key="3">
    <citation type="submission" date="2005-02" db="EMBL/GenBank/DDBJ databases">
        <title>Prediction of the coding sequences of mouse homologues of KIAA gene. The complete nucleotide sequences of mouse KIAA-homologous cDNAs identified by screening of terminal sequences of cDNA clones randomly sampled from size-fractionated libraries.</title>
        <authorList>
            <person name="Okazaki N."/>
            <person name="Kikuno R.F."/>
            <person name="Ohara R."/>
            <person name="Inamoto S."/>
            <person name="Nagase T."/>
            <person name="Ohara O."/>
            <person name="Koga H."/>
        </authorList>
    </citation>
    <scope>NUCLEOTIDE SEQUENCE [LARGE SCALE MRNA] OF 527-1680</scope>
    <source>
        <tissue>Brain</tissue>
    </source>
</reference>
<reference key="4">
    <citation type="journal article" date="2005" name="Science">
        <title>The transcriptional landscape of the mammalian genome.</title>
        <authorList>
            <person name="Carninci P."/>
            <person name="Kasukawa T."/>
            <person name="Katayama S."/>
            <person name="Gough J."/>
            <person name="Frith M.C."/>
            <person name="Maeda N."/>
            <person name="Oyama R."/>
            <person name="Ravasi T."/>
            <person name="Lenhard B."/>
            <person name="Wells C."/>
            <person name="Kodzius R."/>
            <person name="Shimokawa K."/>
            <person name="Bajic V.B."/>
            <person name="Brenner S.E."/>
            <person name="Batalov S."/>
            <person name="Forrest A.R."/>
            <person name="Zavolan M."/>
            <person name="Davis M.J."/>
            <person name="Wilming L.G."/>
            <person name="Aidinis V."/>
            <person name="Allen J.E."/>
            <person name="Ambesi-Impiombato A."/>
            <person name="Apweiler R."/>
            <person name="Aturaliya R.N."/>
            <person name="Bailey T.L."/>
            <person name="Bansal M."/>
            <person name="Baxter L."/>
            <person name="Beisel K.W."/>
            <person name="Bersano T."/>
            <person name="Bono H."/>
            <person name="Chalk A.M."/>
            <person name="Chiu K.P."/>
            <person name="Choudhary V."/>
            <person name="Christoffels A."/>
            <person name="Clutterbuck D.R."/>
            <person name="Crowe M.L."/>
            <person name="Dalla E."/>
            <person name="Dalrymple B.P."/>
            <person name="de Bono B."/>
            <person name="Della Gatta G."/>
            <person name="di Bernardo D."/>
            <person name="Down T."/>
            <person name="Engstrom P."/>
            <person name="Fagiolini M."/>
            <person name="Faulkner G."/>
            <person name="Fletcher C.F."/>
            <person name="Fukushima T."/>
            <person name="Furuno M."/>
            <person name="Futaki S."/>
            <person name="Gariboldi M."/>
            <person name="Georgii-Hemming P."/>
            <person name="Gingeras T.R."/>
            <person name="Gojobori T."/>
            <person name="Green R.E."/>
            <person name="Gustincich S."/>
            <person name="Harbers M."/>
            <person name="Hayashi Y."/>
            <person name="Hensch T.K."/>
            <person name="Hirokawa N."/>
            <person name="Hill D."/>
            <person name="Huminiecki L."/>
            <person name="Iacono M."/>
            <person name="Ikeo K."/>
            <person name="Iwama A."/>
            <person name="Ishikawa T."/>
            <person name="Jakt M."/>
            <person name="Kanapin A."/>
            <person name="Katoh M."/>
            <person name="Kawasawa Y."/>
            <person name="Kelso J."/>
            <person name="Kitamura H."/>
            <person name="Kitano H."/>
            <person name="Kollias G."/>
            <person name="Krishnan S.P."/>
            <person name="Kruger A."/>
            <person name="Kummerfeld S.K."/>
            <person name="Kurochkin I.V."/>
            <person name="Lareau L.F."/>
            <person name="Lazarevic D."/>
            <person name="Lipovich L."/>
            <person name="Liu J."/>
            <person name="Liuni S."/>
            <person name="McWilliam S."/>
            <person name="Madan Babu M."/>
            <person name="Madera M."/>
            <person name="Marchionni L."/>
            <person name="Matsuda H."/>
            <person name="Matsuzawa S."/>
            <person name="Miki H."/>
            <person name="Mignone F."/>
            <person name="Miyake S."/>
            <person name="Morris K."/>
            <person name="Mottagui-Tabar S."/>
            <person name="Mulder N."/>
            <person name="Nakano N."/>
            <person name="Nakauchi H."/>
            <person name="Ng P."/>
            <person name="Nilsson R."/>
            <person name="Nishiguchi S."/>
            <person name="Nishikawa S."/>
            <person name="Nori F."/>
            <person name="Ohara O."/>
            <person name="Okazaki Y."/>
            <person name="Orlando V."/>
            <person name="Pang K.C."/>
            <person name="Pavan W.J."/>
            <person name="Pavesi G."/>
            <person name="Pesole G."/>
            <person name="Petrovsky N."/>
            <person name="Piazza S."/>
            <person name="Reed J."/>
            <person name="Reid J.F."/>
            <person name="Ring B.Z."/>
            <person name="Ringwald M."/>
            <person name="Rost B."/>
            <person name="Ruan Y."/>
            <person name="Salzberg S.L."/>
            <person name="Sandelin A."/>
            <person name="Schneider C."/>
            <person name="Schoenbach C."/>
            <person name="Sekiguchi K."/>
            <person name="Semple C.A."/>
            <person name="Seno S."/>
            <person name="Sessa L."/>
            <person name="Sheng Y."/>
            <person name="Shibata Y."/>
            <person name="Shimada H."/>
            <person name="Shimada K."/>
            <person name="Silva D."/>
            <person name="Sinclair B."/>
            <person name="Sperling S."/>
            <person name="Stupka E."/>
            <person name="Sugiura K."/>
            <person name="Sultana R."/>
            <person name="Takenaka Y."/>
            <person name="Taki K."/>
            <person name="Tammoja K."/>
            <person name="Tan S.L."/>
            <person name="Tang S."/>
            <person name="Taylor M.S."/>
            <person name="Tegner J."/>
            <person name="Teichmann S.A."/>
            <person name="Ueda H.R."/>
            <person name="van Nimwegen E."/>
            <person name="Verardo R."/>
            <person name="Wei C.L."/>
            <person name="Yagi K."/>
            <person name="Yamanishi H."/>
            <person name="Zabarovsky E."/>
            <person name="Zhu S."/>
            <person name="Zimmer A."/>
            <person name="Hide W."/>
            <person name="Bult C."/>
            <person name="Grimmond S.M."/>
            <person name="Teasdale R.D."/>
            <person name="Liu E.T."/>
            <person name="Brusic V."/>
            <person name="Quackenbush J."/>
            <person name="Wahlestedt C."/>
            <person name="Mattick J.S."/>
            <person name="Hume D.A."/>
            <person name="Kai C."/>
            <person name="Sasaki D."/>
            <person name="Tomaru Y."/>
            <person name="Fukuda S."/>
            <person name="Kanamori-Katayama M."/>
            <person name="Suzuki M."/>
            <person name="Aoki J."/>
            <person name="Arakawa T."/>
            <person name="Iida J."/>
            <person name="Imamura K."/>
            <person name="Itoh M."/>
            <person name="Kato T."/>
            <person name="Kawaji H."/>
            <person name="Kawagashira N."/>
            <person name="Kawashima T."/>
            <person name="Kojima M."/>
            <person name="Kondo S."/>
            <person name="Konno H."/>
            <person name="Nakano K."/>
            <person name="Ninomiya N."/>
            <person name="Nishio T."/>
            <person name="Okada M."/>
            <person name="Plessy C."/>
            <person name="Shibata K."/>
            <person name="Shiraki T."/>
            <person name="Suzuki S."/>
            <person name="Tagami M."/>
            <person name="Waki K."/>
            <person name="Watahiki A."/>
            <person name="Okamura-Oho Y."/>
            <person name="Suzuki H."/>
            <person name="Kawai J."/>
            <person name="Hayashizaki Y."/>
        </authorList>
    </citation>
    <scope>NUCLEOTIDE SEQUENCE [LARGE SCALE MRNA] OF 1468-1680</scope>
    <source>
        <strain>C57BL/6J</strain>
        <tissue>Heart</tissue>
    </source>
</reference>
<reference key="5">
    <citation type="submission" date="2009-01" db="UniProtKB">
        <authorList>
            <person name="Lubec G."/>
            <person name="Sunyer B."/>
            <person name="Chen W.-Q."/>
        </authorList>
    </citation>
    <scope>PROTEIN SEQUENCE OF 1612-1622</scope>
    <scope>IDENTIFICATION BY MASS SPECTROMETRY</scope>
    <source>
        <strain>OF1</strain>
        <tissue>Hippocampus</tissue>
    </source>
</reference>
<reference key="6">
    <citation type="journal article" date="2010" name="Cell">
        <title>A tissue-specific atlas of mouse protein phosphorylation and expression.</title>
        <authorList>
            <person name="Huttlin E.L."/>
            <person name="Jedrychowski M.P."/>
            <person name="Elias J.E."/>
            <person name="Goswami T."/>
            <person name="Rad R."/>
            <person name="Beausoleil S.A."/>
            <person name="Villen J."/>
            <person name="Haas W."/>
            <person name="Sowa M.E."/>
            <person name="Gygi S.P."/>
        </authorList>
    </citation>
    <scope>PHOSPHORYLATION [LARGE SCALE ANALYSIS] AT SER-229 AND SER-1199</scope>
    <scope>IDENTIFICATION BY MASS SPECTROMETRY [LARGE SCALE ANALYSIS]</scope>
    <source>
        <tissue>Brown adipose tissue</tissue>
        <tissue>Heart</tissue>
        <tissue>Lung</tissue>
    </source>
</reference>
<reference key="7">
    <citation type="journal article" date="2012" name="Vet. Pathol.">
        <title>Cardiomyopathy in alpha-kinase 3 (ALPK3)-deficient mice.</title>
        <authorList>
            <person name="Van Sligtenhorst I."/>
            <person name="Ding Z.M."/>
            <person name="Shi Z.Z."/>
            <person name="Read R.W."/>
            <person name="Hansen G."/>
            <person name="Vogel P."/>
        </authorList>
    </citation>
    <scope>FUNCTION</scope>
    <scope>DISRUPTION PHENOTYPE</scope>
</reference>
<organism>
    <name type="scientific">Mus musculus</name>
    <name type="common">Mouse</name>
    <dbReference type="NCBI Taxonomy" id="10090"/>
    <lineage>
        <taxon>Eukaryota</taxon>
        <taxon>Metazoa</taxon>
        <taxon>Chordata</taxon>
        <taxon>Craniata</taxon>
        <taxon>Vertebrata</taxon>
        <taxon>Euteleostomi</taxon>
        <taxon>Mammalia</taxon>
        <taxon>Eutheria</taxon>
        <taxon>Euarchontoglires</taxon>
        <taxon>Glires</taxon>
        <taxon>Rodentia</taxon>
        <taxon>Myomorpha</taxon>
        <taxon>Muroidea</taxon>
        <taxon>Muridae</taxon>
        <taxon>Murinae</taxon>
        <taxon>Mus</taxon>
        <taxon>Mus</taxon>
    </lineage>
</organism>
<protein>
    <recommendedName>
        <fullName evidence="11">Alpha-protein kinase 3</fullName>
        <ecNumber evidence="2">2.7.11.1</ecNumber>
    </recommendedName>
    <alternativeName>
        <fullName evidence="9">Myocytic induction/differentiation originator</fullName>
        <shortName evidence="9">Midori</shortName>
    </alternativeName>
</protein>
<accession>Q924C5</accession>
<accession>D3YUT2</accession>
<accession>Q5DTY6</accession>
<accession>Q8C7A3</accession>